<proteinExistence type="inferred from homology"/>
<gene>
    <name type="ordered locus">SH2420</name>
</gene>
<accession>Q4L3P8</accession>
<feature type="chain" id="PRO_0000269526" description="3-hexulose-6-phosphate synthase">
    <location>
        <begin position="1"/>
        <end position="210"/>
    </location>
</feature>
<reference key="1">
    <citation type="journal article" date="2005" name="J. Bacteriol.">
        <title>Whole-genome sequencing of Staphylococcus haemolyticus uncovers the extreme plasticity of its genome and the evolution of human-colonizing staphylococcal species.</title>
        <authorList>
            <person name="Takeuchi F."/>
            <person name="Watanabe S."/>
            <person name="Baba T."/>
            <person name="Yuzawa H."/>
            <person name="Ito T."/>
            <person name="Morimoto Y."/>
            <person name="Kuroda M."/>
            <person name="Cui L."/>
            <person name="Takahashi M."/>
            <person name="Ankai A."/>
            <person name="Baba S."/>
            <person name="Fukui S."/>
            <person name="Lee J.C."/>
            <person name="Hiramatsu K."/>
        </authorList>
    </citation>
    <scope>NUCLEOTIDE SEQUENCE [LARGE SCALE GENOMIC DNA]</scope>
    <source>
        <strain>JCSC1435</strain>
    </source>
</reference>
<sequence>MELQLAIDLLNKEEAAELAKKVEEYVDIVEIGTPIVINEGLPAVQHLDENISNAKVLADLKIMDAADYEVSQAIKFGADVVTILGVAEDASIKAAVEEAHKHDKQLLVDMIAVQDLEKRAKELDEMGADYIAVHTGYDLQAEGQSPLDSLRTVKSVIKNSKVAVAGGIKPDTIKDIVAEQPDLVIVGGGIANADDPVEAAKQCRDAIEGK</sequence>
<protein>
    <recommendedName>
        <fullName>3-hexulose-6-phosphate synthase</fullName>
        <shortName>HPS</shortName>
        <ecNumber>4.1.2.43</ecNumber>
    </recommendedName>
    <alternativeName>
        <fullName>D-arabino-3-hexulose-6-phosphate formaldehyde lyase</fullName>
    </alternativeName>
</protein>
<evidence type="ECO:0000250" key="1"/>
<evidence type="ECO:0000305" key="2"/>
<dbReference type="EC" id="4.1.2.43"/>
<dbReference type="EMBL" id="AP006716">
    <property type="protein sequence ID" value="BAE05729.1"/>
    <property type="molecule type" value="Genomic_DNA"/>
</dbReference>
<dbReference type="RefSeq" id="WP_011276675.1">
    <property type="nucleotide sequence ID" value="NC_007168.1"/>
</dbReference>
<dbReference type="SMR" id="Q4L3P8"/>
<dbReference type="KEGG" id="sha:SH2420"/>
<dbReference type="eggNOG" id="COG0269">
    <property type="taxonomic scope" value="Bacteria"/>
</dbReference>
<dbReference type="HOGENOM" id="CLU_081825_1_0_9"/>
<dbReference type="OrthoDB" id="43475at2"/>
<dbReference type="UniPathway" id="UPA00294">
    <property type="reaction ID" value="UER00434"/>
</dbReference>
<dbReference type="Proteomes" id="UP000000543">
    <property type="component" value="Chromosome"/>
</dbReference>
<dbReference type="GO" id="GO:0033982">
    <property type="term" value="F:3-dehydro-L-gulonate-6-phosphate decarboxylase activity"/>
    <property type="evidence" value="ECO:0007669"/>
    <property type="project" value="TreeGrafter"/>
</dbReference>
<dbReference type="GO" id="GO:0043801">
    <property type="term" value="F:hexulose-6-phosphate synthase activity"/>
    <property type="evidence" value="ECO:0007669"/>
    <property type="project" value="UniProtKB-EC"/>
</dbReference>
<dbReference type="GO" id="GO:0004590">
    <property type="term" value="F:orotidine-5'-phosphate decarboxylase activity"/>
    <property type="evidence" value="ECO:0007669"/>
    <property type="project" value="InterPro"/>
</dbReference>
<dbReference type="GO" id="GO:0006207">
    <property type="term" value="P:'de novo' pyrimidine nucleobase biosynthetic process"/>
    <property type="evidence" value="ECO:0007669"/>
    <property type="project" value="InterPro"/>
</dbReference>
<dbReference type="GO" id="GO:0019647">
    <property type="term" value="P:formaldehyde assimilation via ribulose monophosphate cycle"/>
    <property type="evidence" value="ECO:0007669"/>
    <property type="project" value="UniProtKB-UniPathway"/>
</dbReference>
<dbReference type="GO" id="GO:0019854">
    <property type="term" value="P:L-ascorbic acid catabolic process"/>
    <property type="evidence" value="ECO:0007669"/>
    <property type="project" value="TreeGrafter"/>
</dbReference>
<dbReference type="GO" id="GO:0006730">
    <property type="term" value="P:one-carbon metabolic process"/>
    <property type="evidence" value="ECO:0007669"/>
    <property type="project" value="UniProtKB-KW"/>
</dbReference>
<dbReference type="CDD" id="cd04726">
    <property type="entry name" value="KGPDC_HPS"/>
    <property type="match status" value="1"/>
</dbReference>
<dbReference type="FunFam" id="3.20.20.70:FF:000022">
    <property type="entry name" value="3-keto-L-gulonate-6-phosphate decarboxylase UlaD"/>
    <property type="match status" value="1"/>
</dbReference>
<dbReference type="Gene3D" id="3.20.20.70">
    <property type="entry name" value="Aldolase class I"/>
    <property type="match status" value="1"/>
</dbReference>
<dbReference type="InterPro" id="IPR017553">
    <property type="entry name" value="3-hexulose-6-phosphate_synth"/>
</dbReference>
<dbReference type="InterPro" id="IPR013785">
    <property type="entry name" value="Aldolase_TIM"/>
</dbReference>
<dbReference type="InterPro" id="IPR041710">
    <property type="entry name" value="HPS/KGPDC"/>
</dbReference>
<dbReference type="InterPro" id="IPR001754">
    <property type="entry name" value="OMPdeCOase_dom"/>
</dbReference>
<dbReference type="InterPro" id="IPR011060">
    <property type="entry name" value="RibuloseP-bd_barrel"/>
</dbReference>
<dbReference type="NCBIfam" id="TIGR03128">
    <property type="entry name" value="RuMP_HxlA"/>
    <property type="match status" value="1"/>
</dbReference>
<dbReference type="PANTHER" id="PTHR35039">
    <property type="entry name" value="3-KETO-L-GULONATE-6-PHOSPHATE DECARBOXYLASE SGBH-RELATED"/>
    <property type="match status" value="1"/>
</dbReference>
<dbReference type="PANTHER" id="PTHR35039:SF3">
    <property type="entry name" value="3-KETO-L-GULONATE-6-PHOSPHATE DECARBOXYLASE SGBH-RELATED"/>
    <property type="match status" value="1"/>
</dbReference>
<dbReference type="Pfam" id="PF00215">
    <property type="entry name" value="OMPdecase"/>
    <property type="match status" value="1"/>
</dbReference>
<dbReference type="SMART" id="SM00934">
    <property type="entry name" value="OMPdecase"/>
    <property type="match status" value="1"/>
</dbReference>
<dbReference type="SUPFAM" id="SSF51366">
    <property type="entry name" value="Ribulose-phoshate binding barrel"/>
    <property type="match status" value="1"/>
</dbReference>
<organism>
    <name type="scientific">Staphylococcus haemolyticus (strain JCSC1435)</name>
    <dbReference type="NCBI Taxonomy" id="279808"/>
    <lineage>
        <taxon>Bacteria</taxon>
        <taxon>Bacillati</taxon>
        <taxon>Bacillota</taxon>
        <taxon>Bacilli</taxon>
        <taxon>Bacillales</taxon>
        <taxon>Staphylococcaceae</taxon>
        <taxon>Staphylococcus</taxon>
    </lineage>
</organism>
<name>HPS_STAHJ</name>
<keyword id="KW-0119">Carbohydrate metabolism</keyword>
<keyword id="KW-0456">Lyase</keyword>
<keyword id="KW-0554">One-carbon metabolism</keyword>
<comment type="function">
    <text evidence="1">Catalyzes the condensation of ribulose 5-phosphate with formaldehyde to form 3-hexulose 6-phosphate.</text>
</comment>
<comment type="catalytic activity">
    <reaction>
        <text>D-ribulose 5-phosphate + formaldehyde = D-arabino-hex-3-ulose 6-phosphate</text>
        <dbReference type="Rhea" id="RHEA:25201"/>
        <dbReference type="ChEBI" id="CHEBI:16842"/>
        <dbReference type="ChEBI" id="CHEBI:58121"/>
        <dbReference type="ChEBI" id="CHEBI:58542"/>
        <dbReference type="EC" id="4.1.2.43"/>
    </reaction>
</comment>
<comment type="pathway">
    <text>One-carbon metabolism; formaldehyde assimilation via RuMP pathway; D-fructose 6-phosphate from D-ribulose 5-phosphate and formaldehyde: step 1/2.</text>
</comment>
<comment type="similarity">
    <text evidence="2">Belongs to the HPS/KGPDC family. HPS subfamily.</text>
</comment>